<dbReference type="EC" id="2.7.8.7" evidence="2 4"/>
<dbReference type="EMBL" id="X63158">
    <property type="protein sequence ID" value="CAA44858.1"/>
    <property type="molecule type" value="Genomic_DNA"/>
</dbReference>
<dbReference type="EMBL" id="X65610">
    <property type="protein sequence ID" value="CAA46561.1"/>
    <property type="molecule type" value="Genomic_DNA"/>
</dbReference>
<dbReference type="EMBL" id="L17438">
    <property type="protein sequence ID" value="AAC36829.1"/>
    <property type="molecule type" value="Unassigned_DNA"/>
</dbReference>
<dbReference type="EMBL" id="X70356">
    <property type="status" value="NOT_ANNOTATED_CDS"/>
    <property type="molecule type" value="Genomic_DNA"/>
</dbReference>
<dbReference type="EMBL" id="D50562">
    <property type="protein sequence ID" value="BAA09125.1"/>
    <property type="molecule type" value="Genomic_DNA"/>
</dbReference>
<dbReference type="EMBL" id="AL009126">
    <property type="protein sequence ID" value="CAB12151.2"/>
    <property type="molecule type" value="Genomic_DNA"/>
</dbReference>
<dbReference type="PIR" id="S20463">
    <property type="entry name" value="S20463"/>
</dbReference>
<dbReference type="PDB" id="1QR0">
    <property type="method" value="X-ray"/>
    <property type="resolution" value="1.90 A"/>
    <property type="chains" value="A=1-224"/>
</dbReference>
<dbReference type="PDB" id="4MRT">
    <property type="method" value="X-ray"/>
    <property type="resolution" value="2.00 A"/>
    <property type="chains" value="A=1-224"/>
</dbReference>
<dbReference type="PDBsum" id="1QR0"/>
<dbReference type="PDBsum" id="4MRT"/>
<dbReference type="SMR" id="P39135"/>
<dbReference type="FunCoup" id="P39135">
    <property type="interactions" value="342"/>
</dbReference>
<dbReference type="DrugBank" id="DB01992">
    <property type="generic name" value="Coenzyme A"/>
</dbReference>
<dbReference type="InParanoid" id="P39135"/>
<dbReference type="BioCyc" id="MetaCyc:MONOMER-13919"/>
<dbReference type="BRENDA" id="2.7.8.7">
    <property type="organism ID" value="658"/>
</dbReference>
<dbReference type="EvolutionaryTrace" id="P39135"/>
<dbReference type="Proteomes" id="UP000001570">
    <property type="component" value="Chromosome"/>
</dbReference>
<dbReference type="GO" id="GO:0005829">
    <property type="term" value="C:cytosol"/>
    <property type="evidence" value="ECO:0000318"/>
    <property type="project" value="GO_Central"/>
</dbReference>
<dbReference type="GO" id="GO:0008897">
    <property type="term" value="F:holo-[acyl-carrier-protein] synthase activity"/>
    <property type="evidence" value="ECO:0000318"/>
    <property type="project" value="GO_Central"/>
</dbReference>
<dbReference type="GO" id="GO:0000287">
    <property type="term" value="F:magnesium ion binding"/>
    <property type="evidence" value="ECO:0007669"/>
    <property type="project" value="InterPro"/>
</dbReference>
<dbReference type="GO" id="GO:0017000">
    <property type="term" value="P:antibiotic biosynthetic process"/>
    <property type="evidence" value="ECO:0007669"/>
    <property type="project" value="UniProtKB-KW"/>
</dbReference>
<dbReference type="GO" id="GO:0006633">
    <property type="term" value="P:fatty acid biosynthetic process"/>
    <property type="evidence" value="ECO:0007669"/>
    <property type="project" value="InterPro"/>
</dbReference>
<dbReference type="GO" id="GO:0019878">
    <property type="term" value="P:lysine biosynthetic process via aminoadipic acid"/>
    <property type="evidence" value="ECO:0000318"/>
    <property type="project" value="GO_Central"/>
</dbReference>
<dbReference type="GO" id="GO:1900192">
    <property type="term" value="P:positive regulation of single-species biofilm formation"/>
    <property type="evidence" value="ECO:0000315"/>
    <property type="project" value="CACAO"/>
</dbReference>
<dbReference type="Gene3D" id="3.90.470.20">
    <property type="entry name" value="4'-phosphopantetheinyl transferase domain"/>
    <property type="match status" value="2"/>
</dbReference>
<dbReference type="InterPro" id="IPR008278">
    <property type="entry name" value="4-PPantetheinyl_Trfase_dom"/>
</dbReference>
<dbReference type="InterPro" id="IPR037143">
    <property type="entry name" value="4-PPantetheinyl_Trfase_dom_sf"/>
</dbReference>
<dbReference type="InterPro" id="IPR055066">
    <property type="entry name" value="AASDHPPT_N"/>
</dbReference>
<dbReference type="InterPro" id="IPR050559">
    <property type="entry name" value="P-Pant_transferase_sf"/>
</dbReference>
<dbReference type="InterPro" id="IPR004568">
    <property type="entry name" value="Ppantetheine-prot_Trfase_dom"/>
</dbReference>
<dbReference type="NCBIfam" id="TIGR00556">
    <property type="entry name" value="pantethn_trn"/>
    <property type="match status" value="1"/>
</dbReference>
<dbReference type="PANTHER" id="PTHR12215:SF10">
    <property type="entry name" value="L-AMINOADIPATE-SEMIALDEHYDE DEHYDROGENASE-PHOSPHOPANTETHEINYL TRANSFERASE"/>
    <property type="match status" value="1"/>
</dbReference>
<dbReference type="PANTHER" id="PTHR12215">
    <property type="entry name" value="PHOSPHOPANTETHEINE TRANSFERASE"/>
    <property type="match status" value="1"/>
</dbReference>
<dbReference type="Pfam" id="PF22624">
    <property type="entry name" value="AASDHPPT_N"/>
    <property type="match status" value="1"/>
</dbReference>
<dbReference type="Pfam" id="PF01648">
    <property type="entry name" value="ACPS"/>
    <property type="match status" value="1"/>
</dbReference>
<dbReference type="SUPFAM" id="SSF56214">
    <property type="entry name" value="4'-phosphopantetheinyl transferase"/>
    <property type="match status" value="2"/>
</dbReference>
<reference key="1">
    <citation type="journal article" date="1992" name="Mol. Gen. Genet.">
        <title>Isolation and characterization of sfp: a gene that functions in the production of the lipopeptide biosurfactant, surfactin, in Bacillus subtilis.</title>
        <authorList>
            <person name="Nakano M.M."/>
            <person name="Corbell N."/>
            <person name="Besson J."/>
            <person name="Zuber P."/>
        </authorList>
    </citation>
    <scope>NUCLEOTIDE SEQUENCE [GENOMIC DNA]</scope>
    <scope>PROTEIN SEQUENCE OF 1-14</scope>
    <source>
        <strain>168</strain>
        <strain>oKB105</strain>
    </source>
</reference>
<reference key="2">
    <citation type="journal article" date="1993" name="J. Bacteriol.">
        <title>Isolation and characterization of Bacillus subtilis genes involved in siderophore biosynthesis: relationship between B. subtilis sfpo and Escherichia coli entD genes.</title>
        <authorList>
            <person name="Grossman T.H."/>
            <person name="Tuckman M."/>
            <person name="Ellestad S."/>
            <person name="Osburne M.S."/>
        </authorList>
    </citation>
    <scope>NUCLEOTIDE SEQUENCE [GENOMIC DNA]</scope>
    <source>
        <strain>168</strain>
    </source>
</reference>
<reference key="3">
    <citation type="journal article" date="1993" name="Mol. Microbiol.">
        <title>Sequence and analysis of the genetic locus responsible for surfactin synthesis in Bacillus subtilis.</title>
        <authorList>
            <person name="Cosmina P."/>
            <person name="Rodriguez F."/>
            <person name="de Ferra F."/>
            <person name="Grandi G."/>
            <person name="Perego M."/>
            <person name="Venema G."/>
            <person name="van Sinderen D."/>
        </authorList>
    </citation>
    <scope>NUCLEOTIDE SEQUENCE [GENOMIC DNA]</scope>
    <source>
        <strain>168 / JH624</strain>
        <strain>ATCC 21332 / IAM 1213</strain>
    </source>
</reference>
<reference key="4">
    <citation type="journal article" date="1996" name="Arch. Microbiol.">
        <title>Isolation of a gene essential for biosynthesis of the lipopeptide antibiotics plipastatin B1 and surfactin in Bacillus subtilis YB8.</title>
        <authorList>
            <person name="Tsuge K."/>
            <person name="Ano T."/>
            <person name="Shoda M."/>
        </authorList>
    </citation>
    <scope>NUCLEOTIDE SEQUENCE [GENOMIC DNA]</scope>
    <source>
        <strain>YB8</strain>
    </source>
</reference>
<reference key="5">
    <citation type="journal article" date="1997" name="Nature">
        <title>The complete genome sequence of the Gram-positive bacterium Bacillus subtilis.</title>
        <authorList>
            <person name="Kunst F."/>
            <person name="Ogasawara N."/>
            <person name="Moszer I."/>
            <person name="Albertini A.M."/>
            <person name="Alloni G."/>
            <person name="Azevedo V."/>
            <person name="Bertero M.G."/>
            <person name="Bessieres P."/>
            <person name="Bolotin A."/>
            <person name="Borchert S."/>
            <person name="Borriss R."/>
            <person name="Boursier L."/>
            <person name="Brans A."/>
            <person name="Braun M."/>
            <person name="Brignell S.C."/>
            <person name="Bron S."/>
            <person name="Brouillet S."/>
            <person name="Bruschi C.V."/>
            <person name="Caldwell B."/>
            <person name="Capuano V."/>
            <person name="Carter N.M."/>
            <person name="Choi S.-K."/>
            <person name="Codani J.-J."/>
            <person name="Connerton I.F."/>
            <person name="Cummings N.J."/>
            <person name="Daniel R.A."/>
            <person name="Denizot F."/>
            <person name="Devine K.M."/>
            <person name="Duesterhoeft A."/>
            <person name="Ehrlich S.D."/>
            <person name="Emmerson P.T."/>
            <person name="Entian K.-D."/>
            <person name="Errington J."/>
            <person name="Fabret C."/>
            <person name="Ferrari E."/>
            <person name="Foulger D."/>
            <person name="Fritz C."/>
            <person name="Fujita M."/>
            <person name="Fujita Y."/>
            <person name="Fuma S."/>
            <person name="Galizzi A."/>
            <person name="Galleron N."/>
            <person name="Ghim S.-Y."/>
            <person name="Glaser P."/>
            <person name="Goffeau A."/>
            <person name="Golightly E.J."/>
            <person name="Grandi G."/>
            <person name="Guiseppi G."/>
            <person name="Guy B.J."/>
            <person name="Haga K."/>
            <person name="Haiech J."/>
            <person name="Harwood C.R."/>
            <person name="Henaut A."/>
            <person name="Hilbert H."/>
            <person name="Holsappel S."/>
            <person name="Hosono S."/>
            <person name="Hullo M.-F."/>
            <person name="Itaya M."/>
            <person name="Jones L.-M."/>
            <person name="Joris B."/>
            <person name="Karamata D."/>
            <person name="Kasahara Y."/>
            <person name="Klaerr-Blanchard M."/>
            <person name="Klein C."/>
            <person name="Kobayashi Y."/>
            <person name="Koetter P."/>
            <person name="Koningstein G."/>
            <person name="Krogh S."/>
            <person name="Kumano M."/>
            <person name="Kurita K."/>
            <person name="Lapidus A."/>
            <person name="Lardinois S."/>
            <person name="Lauber J."/>
            <person name="Lazarevic V."/>
            <person name="Lee S.-M."/>
            <person name="Levine A."/>
            <person name="Liu H."/>
            <person name="Masuda S."/>
            <person name="Mauel C."/>
            <person name="Medigue C."/>
            <person name="Medina N."/>
            <person name="Mellado R.P."/>
            <person name="Mizuno M."/>
            <person name="Moestl D."/>
            <person name="Nakai S."/>
            <person name="Noback M."/>
            <person name="Noone D."/>
            <person name="O'Reilly M."/>
            <person name="Ogawa K."/>
            <person name="Ogiwara A."/>
            <person name="Oudega B."/>
            <person name="Park S.-H."/>
            <person name="Parro V."/>
            <person name="Pohl T.M."/>
            <person name="Portetelle D."/>
            <person name="Porwollik S."/>
            <person name="Prescott A.M."/>
            <person name="Presecan E."/>
            <person name="Pujic P."/>
            <person name="Purnelle B."/>
            <person name="Rapoport G."/>
            <person name="Rey M."/>
            <person name="Reynolds S."/>
            <person name="Rieger M."/>
            <person name="Rivolta C."/>
            <person name="Rocha E."/>
            <person name="Roche B."/>
            <person name="Rose M."/>
            <person name="Sadaie Y."/>
            <person name="Sato T."/>
            <person name="Scanlan E."/>
            <person name="Schleich S."/>
            <person name="Schroeter R."/>
            <person name="Scoffone F."/>
            <person name="Sekiguchi J."/>
            <person name="Sekowska A."/>
            <person name="Seror S.J."/>
            <person name="Serror P."/>
            <person name="Shin B.-S."/>
            <person name="Soldo B."/>
            <person name="Sorokin A."/>
            <person name="Tacconi E."/>
            <person name="Takagi T."/>
            <person name="Takahashi H."/>
            <person name="Takemaru K."/>
            <person name="Takeuchi M."/>
            <person name="Tamakoshi A."/>
            <person name="Tanaka T."/>
            <person name="Terpstra P."/>
            <person name="Tognoni A."/>
            <person name="Tosato V."/>
            <person name="Uchiyama S."/>
            <person name="Vandenbol M."/>
            <person name="Vannier F."/>
            <person name="Vassarotti A."/>
            <person name="Viari A."/>
            <person name="Wambutt R."/>
            <person name="Wedler E."/>
            <person name="Wedler H."/>
            <person name="Weitzenegger T."/>
            <person name="Winters P."/>
            <person name="Wipat A."/>
            <person name="Yamamoto H."/>
            <person name="Yamane K."/>
            <person name="Yasumoto K."/>
            <person name="Yata K."/>
            <person name="Yoshida K."/>
            <person name="Yoshikawa H.-F."/>
            <person name="Zumstein E."/>
            <person name="Yoshikawa H."/>
            <person name="Danchin A."/>
        </authorList>
    </citation>
    <scope>NUCLEOTIDE SEQUENCE [LARGE SCALE GENOMIC DNA]</scope>
    <source>
        <strain>168</strain>
    </source>
</reference>
<reference key="6">
    <citation type="journal article" date="2009" name="Microbiology">
        <title>From a consortium sequence to a unified sequence: the Bacillus subtilis 168 reference genome a decade later.</title>
        <authorList>
            <person name="Barbe V."/>
            <person name="Cruveiller S."/>
            <person name="Kunst F."/>
            <person name="Lenoble P."/>
            <person name="Meurice G."/>
            <person name="Sekowska A."/>
            <person name="Vallenet D."/>
            <person name="Wang T."/>
            <person name="Moszer I."/>
            <person name="Medigue C."/>
            <person name="Danchin A."/>
        </authorList>
    </citation>
    <scope>SEQUENCE REVISION</scope>
</reference>
<reference key="7">
    <citation type="journal article" date="1996" name="Chem. Biol.">
        <title>A new enzyme superfamily -- the phosphopantetheinyl transferases.</title>
        <authorList>
            <person name="Lambalot R.H."/>
            <person name="Gehring A.M."/>
            <person name="Flugel R.S."/>
            <person name="Zuber P."/>
            <person name="LaCelle M."/>
            <person name="Marahiel M.A."/>
            <person name="Reid R."/>
            <person name="Khosla C."/>
            <person name="Walsh C.T."/>
        </authorList>
    </citation>
    <scope>FUNCTION</scope>
</reference>
<reference key="8">
    <citation type="journal article" date="1998" name="Biochemistry">
        <title>Characterization of Sfp, a Bacillus subtilis phosphopantetheinyl transferase for peptidyl carrier protein domains in peptide synthetases.</title>
        <authorList>
            <person name="Quadri L.E.N."/>
            <person name="Weinreb P.H."/>
            <person name="Lei M."/>
            <person name="Nakano M.M."/>
            <person name="Zuber P."/>
            <person name="Walsh C.T."/>
        </authorList>
    </citation>
    <scope>FUNCTION</scope>
    <scope>CATALYTIC ACTIVITY</scope>
    <scope>BIOPHYSICOCHEMICAL PROPERTIES</scope>
    <scope>MUTAGENESIS OF GLY-105; ASP-107; TRP-147; GLU-151 AND LYS-155</scope>
</reference>
<reference key="9">
    <citation type="journal article" date="2001" name="Chem. Biol.">
        <title>Cloning and characterization of a phosphopantetheinyl transferase from Streptomyces verticillus ATCC15003, the producer of the hybrid peptide-polyketide antitumor drug bleomycin.</title>
        <authorList>
            <person name="Sanchez C."/>
            <person name="Du L."/>
            <person name="Edwards D.J."/>
            <person name="Toney M.D."/>
            <person name="Shen B."/>
        </authorList>
    </citation>
    <scope>CATALYTIC ACTIVITY</scope>
    <scope>BIOPHYSICOCHEMICAL PROPERTIES</scope>
</reference>
<reference key="10">
    <citation type="journal article" date="1999" name="EMBO J.">
        <title>Crystal structure of the surfactin synthetase-activating enzyme sfp: a prototype of the 4'-phosphopantetheinyl transferase superfamily.</title>
        <authorList>
            <person name="Reuter K."/>
            <person name="Mofid M.R."/>
            <person name="Marahiel M.A."/>
            <person name="Ficner R."/>
        </authorList>
    </citation>
    <scope>X-RAY CRYSTALLOGRAPHY (1.8 ANGSTROMS)</scope>
</reference>
<name>SFP_BACSU</name>
<feature type="chain" id="PRO_0000206077" description="4'-phosphopantetheinyl transferase Sfp">
    <location>
        <begin position="1"/>
        <end position="224"/>
    </location>
</feature>
<feature type="region of interest" description="Peptidyl carrier protein binding" evidence="1">
    <location>
        <begin position="158"/>
        <end position="189"/>
    </location>
</feature>
<feature type="binding site">
    <location>
        <position position="107"/>
    </location>
    <ligand>
        <name>Mg(2+)</name>
        <dbReference type="ChEBI" id="CHEBI:18420"/>
    </ligand>
</feature>
<feature type="binding site">
    <location>
        <position position="109"/>
    </location>
    <ligand>
        <name>Mg(2+)</name>
        <dbReference type="ChEBI" id="CHEBI:18420"/>
    </ligand>
</feature>
<feature type="binding site">
    <location>
        <position position="151"/>
    </location>
    <ligand>
        <name>Mg(2+)</name>
        <dbReference type="ChEBI" id="CHEBI:18420"/>
    </ligand>
</feature>
<feature type="sequence variant" description="In strain: oKB105.">
    <original>S</original>
    <variation>T</variation>
    <location>
        <position position="22"/>
    </location>
</feature>
<feature type="sequence variant" description="In strain: oKB105.">
    <original>C</original>
    <variation>G</variation>
    <location>
        <position position="97"/>
    </location>
</feature>
<feature type="sequence variant" description="In strain: 168 and its derivatives, non surfactin-producing strains.">
    <original>EGKGLSLPLDSFSVRLHQDGQVSIELPDSHSPCYIKTYEVDPGYKMAVCAAHPDFPEDITMVSYEELL</original>
    <variation>GRQRLIASA</variation>
    <location>
        <begin position="157"/>
        <end position="224"/>
    </location>
</feature>
<feature type="mutagenesis site" description="Almost no activity." evidence="4">
    <original>G</original>
    <variation>A</variation>
    <location>
        <position position="105"/>
    </location>
</feature>
<feature type="mutagenesis site" description="Loss of activity." evidence="4">
    <original>G</original>
    <variation>D</variation>
    <location>
        <position position="105"/>
    </location>
</feature>
<feature type="mutagenesis site" description="Loss of activity." evidence="4">
    <original>D</original>
    <variation>A</variation>
    <location>
        <position position="107"/>
    </location>
</feature>
<feature type="mutagenesis site" description="3000-fold reduction in activity, but no change in substrate affinity." evidence="4">
    <original>D</original>
    <variation>E</variation>
    <location>
        <position position="107"/>
    </location>
</feature>
<feature type="mutagenesis site" description="24-fold reduction in activity, but no change in substrate affinity." evidence="4">
    <original>W</original>
    <variation>A</variation>
    <location>
        <position position="147"/>
    </location>
</feature>
<feature type="mutagenesis site" description="5-fold reduction in activity, but no change in substrate affinity." evidence="4">
    <original>W</original>
    <variation>F</variation>
    <location>
        <position position="147"/>
    </location>
</feature>
<feature type="mutagenesis site" description="Loss of activity." evidence="4">
    <original>E</original>
    <variation>A</variation>
    <location>
        <position position="151"/>
    </location>
</feature>
<feature type="mutagenesis site" description="Loss of activity." evidence="4">
    <original>K</original>
    <variation>A</variation>
    <location>
        <position position="155"/>
    </location>
</feature>
<feature type="sequence conflict" description="In Ref. 3; CAA46561." evidence="5" ref="3">
    <original>IA</original>
    <variation>MP</variation>
    <location>
        <begin position="118"/>
        <end position="119"/>
    </location>
</feature>
<feature type="strand" evidence="6">
    <location>
        <begin position="2"/>
        <end position="7"/>
    </location>
</feature>
<feature type="helix" evidence="6">
    <location>
        <begin position="14"/>
        <end position="21"/>
    </location>
</feature>
<feature type="helix" evidence="6">
    <location>
        <begin position="26"/>
        <end position="34"/>
    </location>
</feature>
<feature type="helix" evidence="6">
    <location>
        <begin position="38"/>
        <end position="58"/>
    </location>
</feature>
<feature type="helix" evidence="6">
    <location>
        <begin position="63"/>
        <end position="65"/>
    </location>
</feature>
<feature type="strand" evidence="6">
    <location>
        <begin position="85"/>
        <end position="91"/>
    </location>
</feature>
<feature type="strand" evidence="6">
    <location>
        <begin position="94"/>
        <end position="102"/>
    </location>
</feature>
<feature type="strand" evidence="6">
    <location>
        <begin position="105"/>
        <end position="110"/>
    </location>
</feature>
<feature type="helix" evidence="6">
    <location>
        <begin position="116"/>
        <end position="119"/>
    </location>
</feature>
<feature type="strand" evidence="6">
    <location>
        <begin position="120"/>
        <end position="123"/>
    </location>
</feature>
<feature type="helix" evidence="6">
    <location>
        <begin position="125"/>
        <end position="133"/>
    </location>
</feature>
<feature type="helix" evidence="6">
    <location>
        <begin position="136"/>
        <end position="157"/>
    </location>
</feature>
<feature type="helix" evidence="7">
    <location>
        <begin position="160"/>
        <end position="162"/>
    </location>
</feature>
<feature type="helix" evidence="7">
    <location>
        <begin position="165"/>
        <end position="167"/>
    </location>
</feature>
<feature type="strand" evidence="6">
    <location>
        <begin position="169"/>
        <end position="172"/>
    </location>
</feature>
<feature type="helix" evidence="6">
    <location>
        <begin position="174"/>
        <end position="176"/>
    </location>
</feature>
<feature type="strand" evidence="6">
    <location>
        <begin position="178"/>
        <end position="181"/>
    </location>
</feature>
<feature type="strand" evidence="6">
    <location>
        <begin position="190"/>
        <end position="194"/>
    </location>
</feature>
<feature type="strand" evidence="6">
    <location>
        <begin position="200"/>
        <end position="209"/>
    </location>
</feature>
<feature type="helix" evidence="6">
    <location>
        <begin position="220"/>
        <end position="224"/>
    </location>
</feature>
<sequence length="224" mass="26168">MKIYGIYMDRPLSQEENERFMSFISPEKREKCRRFYHKEDAHRTLLGDVLVRSVISRQYQLDKSDIRFSTQEYGKPCIPDLPDAHFNISHSGRWVICAFDSQPIGIDIEKTKPISLEIAKRFFSKTEYSDLLAKDKDEQTDYFYHLWSMKESFIKQEGKGLSLPLDSFSVRLHQDGQVSIELPDSHSPCYIKTYEVDPGYKMAVCAAHPDFPEDITMVSYEELL</sequence>
<proteinExistence type="evidence at protein level"/>
<evidence type="ECO:0000255" key="1"/>
<evidence type="ECO:0000269" key="2">
    <source>
    </source>
</evidence>
<evidence type="ECO:0000269" key="3">
    <source>
    </source>
</evidence>
<evidence type="ECO:0000269" key="4">
    <source>
    </source>
</evidence>
<evidence type="ECO:0000305" key="5"/>
<evidence type="ECO:0007829" key="6">
    <source>
        <dbReference type="PDB" id="1QR0"/>
    </source>
</evidence>
<evidence type="ECO:0007829" key="7">
    <source>
        <dbReference type="PDB" id="4MRT"/>
    </source>
</evidence>
<protein>
    <recommendedName>
        <fullName>4'-phosphopantetheinyl transferase Sfp</fullName>
        <ecNumber evidence="2 4">2.7.8.7</ecNumber>
    </recommendedName>
    <alternativeName>
        <fullName>Surfactin synthase-activating enzyme</fullName>
    </alternativeName>
</protein>
<gene>
    <name type="primary">sfp</name>
    <name type="synonym">lpa-8</name>
    <name type="ordered locus">BSU03570</name>
</gene>
<comment type="function">
    <text evidence="3 4">Activates the seven peptidyl carrier protein (PCP) domains of the first three subunits (SrfAA, SrfAB and SrfAC) of surfactin synthetase by transferring the 4'-phosphopantetheinyl moiety of coenzyme A (CoA) to a serine residue. Required for cells of B.subtilis to become producers of the lipopeptide antibiotics surfactin and plipastatin B1.</text>
</comment>
<comment type="catalytic activity">
    <reaction evidence="2 4">
        <text>apo-[ACP] + CoA = holo-[ACP] + adenosine 3',5'-bisphosphate + H(+)</text>
        <dbReference type="Rhea" id="RHEA:12068"/>
        <dbReference type="Rhea" id="RHEA-COMP:9685"/>
        <dbReference type="Rhea" id="RHEA-COMP:9690"/>
        <dbReference type="ChEBI" id="CHEBI:15378"/>
        <dbReference type="ChEBI" id="CHEBI:29999"/>
        <dbReference type="ChEBI" id="CHEBI:57287"/>
        <dbReference type="ChEBI" id="CHEBI:58343"/>
        <dbReference type="ChEBI" id="CHEBI:64479"/>
        <dbReference type="EC" id="2.7.8.7"/>
    </reaction>
</comment>
<comment type="cofactor">
    <cofactor>
        <name>Mg(2+)</name>
        <dbReference type="ChEBI" id="CHEBI:18420"/>
    </cofactor>
</comment>
<comment type="biophysicochemical properties">
    <kinetics>
        <KM evidence="4">0.7 uM for coenzyme A</KM>
        <KM evidence="4">1.3 uM for a peptide fragment encompassing residues 960-1084 of surfactin synthetase SrfAB subunit</KM>
        <KM evidence="4">1.8 uM for a peptide fragment encompassing residues 2006-2123 of surfactin synthetase SrfAB subunit</KM>
        <KM evidence="2">3.7 uM for Streptomyces mobaraensis apo-PCP BlmI</KM>
        <KM evidence="2">11 uM for Streptomyces glaucescens apo-ACP TcmM</KM>
        <text evidence="2 4">kcat is 104 min(-1) with a peptide fragment encompassing residues 960-1084 of surfactin synthetase SrfAB subunit as substrate. kcat is 56 min(-1) with a peptide fragment encompassing residues 2006-2123 of surfactin synthetase SrfAB subunit as substrate (PubMed:9484229). kcat is 7.2 min(-1) with S.mobaraensis apo-PCP BlmI as substrate and 0.89 min(-1) with S.glaucescens apo-ACP TcmM as substrate (PubMed:11451672).</text>
    </kinetics>
    <phDependence>
        <text evidence="4">Optimum pH is 6.0. Displays less than 20% of Vmax at both pH 5.0 and pH 7.0.</text>
    </phDependence>
</comment>
<comment type="subunit">
    <text>Monomer in solution.</text>
</comment>
<comment type="similarity">
    <text evidence="5">Belongs to the P-Pant transferase superfamily. Gsp/Sfp/HetI/AcpT family.</text>
</comment>
<comment type="caution">
    <text evidence="5">Strain 168 and its derivatives encode a truncated, inactive version of this protein. The sequence shown here corresponds to that of strain ATCC 21332 which is active.</text>
</comment>
<keyword id="KW-0002">3D-structure</keyword>
<keyword id="KW-0045">Antibiotic biosynthesis</keyword>
<keyword id="KW-0903">Direct protein sequencing</keyword>
<keyword id="KW-0460">Magnesium</keyword>
<keyword id="KW-0479">Metal-binding</keyword>
<keyword id="KW-1185">Reference proteome</keyword>
<keyword id="KW-0808">Transferase</keyword>
<organism>
    <name type="scientific">Bacillus subtilis (strain 168)</name>
    <dbReference type="NCBI Taxonomy" id="224308"/>
    <lineage>
        <taxon>Bacteria</taxon>
        <taxon>Bacillati</taxon>
        <taxon>Bacillota</taxon>
        <taxon>Bacilli</taxon>
        <taxon>Bacillales</taxon>
        <taxon>Bacillaceae</taxon>
        <taxon>Bacillus</taxon>
    </lineage>
</organism>
<accession>P39135</accession>